<feature type="chain" id="PRO_0000270272" description="Methionine import ATP-binding protein MetN 1">
    <location>
        <begin position="1"/>
        <end position="344"/>
    </location>
</feature>
<feature type="domain" description="ABC transporter" evidence="1">
    <location>
        <begin position="2"/>
        <end position="241"/>
    </location>
</feature>
<feature type="binding site" evidence="1">
    <location>
        <begin position="38"/>
        <end position="45"/>
    </location>
    <ligand>
        <name>ATP</name>
        <dbReference type="ChEBI" id="CHEBI:30616"/>
    </ligand>
</feature>
<proteinExistence type="inferred from homology"/>
<comment type="function">
    <text evidence="1">Part of the ABC transporter complex MetNIQ involved in methionine import. Responsible for energy coupling to the transport system.</text>
</comment>
<comment type="catalytic activity">
    <reaction evidence="1">
        <text>L-methionine(out) + ATP + H2O = L-methionine(in) + ADP + phosphate + H(+)</text>
        <dbReference type="Rhea" id="RHEA:29779"/>
        <dbReference type="ChEBI" id="CHEBI:15377"/>
        <dbReference type="ChEBI" id="CHEBI:15378"/>
        <dbReference type="ChEBI" id="CHEBI:30616"/>
        <dbReference type="ChEBI" id="CHEBI:43474"/>
        <dbReference type="ChEBI" id="CHEBI:57844"/>
        <dbReference type="ChEBI" id="CHEBI:456216"/>
        <dbReference type="EC" id="7.4.2.11"/>
    </reaction>
</comment>
<comment type="catalytic activity">
    <reaction evidence="1">
        <text>D-methionine(out) + ATP + H2O = D-methionine(in) + ADP + phosphate + H(+)</text>
        <dbReference type="Rhea" id="RHEA:29767"/>
        <dbReference type="ChEBI" id="CHEBI:15377"/>
        <dbReference type="ChEBI" id="CHEBI:15378"/>
        <dbReference type="ChEBI" id="CHEBI:30616"/>
        <dbReference type="ChEBI" id="CHEBI:43474"/>
        <dbReference type="ChEBI" id="CHEBI:57932"/>
        <dbReference type="ChEBI" id="CHEBI:456216"/>
        <dbReference type="EC" id="7.4.2.11"/>
    </reaction>
</comment>
<comment type="subunit">
    <text evidence="1">The complex is composed of two ATP-binding proteins (MetN), two transmembrane proteins (MetI) and a solute-binding protein (MetQ).</text>
</comment>
<comment type="subcellular location">
    <subcellularLocation>
        <location evidence="1">Cell inner membrane</location>
        <topology evidence="1">Peripheral membrane protein</topology>
    </subcellularLocation>
</comment>
<comment type="similarity">
    <text evidence="1">Belongs to the ABC transporter superfamily. Methionine importer (TC 3.A.1.24) family.</text>
</comment>
<keyword id="KW-0029">Amino-acid transport</keyword>
<keyword id="KW-0067">ATP-binding</keyword>
<keyword id="KW-0997">Cell inner membrane</keyword>
<keyword id="KW-1003">Cell membrane</keyword>
<keyword id="KW-0472">Membrane</keyword>
<keyword id="KW-0547">Nucleotide-binding</keyword>
<keyword id="KW-1185">Reference proteome</keyword>
<keyword id="KW-1278">Translocase</keyword>
<keyword id="KW-0813">Transport</keyword>
<accession>Q13VD7</accession>
<organism>
    <name type="scientific">Paraburkholderia xenovorans (strain LB400)</name>
    <dbReference type="NCBI Taxonomy" id="266265"/>
    <lineage>
        <taxon>Bacteria</taxon>
        <taxon>Pseudomonadati</taxon>
        <taxon>Pseudomonadota</taxon>
        <taxon>Betaproteobacteria</taxon>
        <taxon>Burkholderiales</taxon>
        <taxon>Burkholderiaceae</taxon>
        <taxon>Paraburkholderia</taxon>
    </lineage>
</organism>
<dbReference type="EC" id="7.4.2.11" evidence="1"/>
<dbReference type="EMBL" id="CP000270">
    <property type="protein sequence ID" value="ABE31952.1"/>
    <property type="molecule type" value="Genomic_DNA"/>
</dbReference>
<dbReference type="RefSeq" id="WP_011489467.1">
    <property type="nucleotide sequence ID" value="NC_007951.1"/>
</dbReference>
<dbReference type="SMR" id="Q13VD7"/>
<dbReference type="STRING" id="266265.Bxe_A0995"/>
<dbReference type="KEGG" id="bxb:DR64_3156"/>
<dbReference type="KEGG" id="bxe:Bxe_A0995"/>
<dbReference type="PATRIC" id="fig|266265.5.peg.3585"/>
<dbReference type="eggNOG" id="COG1135">
    <property type="taxonomic scope" value="Bacteria"/>
</dbReference>
<dbReference type="OrthoDB" id="9802264at2"/>
<dbReference type="Proteomes" id="UP000001817">
    <property type="component" value="Chromosome 1"/>
</dbReference>
<dbReference type="GO" id="GO:0005886">
    <property type="term" value="C:plasma membrane"/>
    <property type="evidence" value="ECO:0007669"/>
    <property type="project" value="UniProtKB-SubCell"/>
</dbReference>
<dbReference type="GO" id="GO:0033232">
    <property type="term" value="F:ABC-type D-methionine transporter activity"/>
    <property type="evidence" value="ECO:0007669"/>
    <property type="project" value="UniProtKB-EC"/>
</dbReference>
<dbReference type="GO" id="GO:0005524">
    <property type="term" value="F:ATP binding"/>
    <property type="evidence" value="ECO:0007669"/>
    <property type="project" value="UniProtKB-KW"/>
</dbReference>
<dbReference type="GO" id="GO:0016887">
    <property type="term" value="F:ATP hydrolysis activity"/>
    <property type="evidence" value="ECO:0007669"/>
    <property type="project" value="InterPro"/>
</dbReference>
<dbReference type="CDD" id="cd03258">
    <property type="entry name" value="ABC_MetN_methionine_transporter"/>
    <property type="match status" value="1"/>
</dbReference>
<dbReference type="FunFam" id="3.40.50.300:FF:000056">
    <property type="entry name" value="Cell division ATP-binding protein FtsE"/>
    <property type="match status" value="1"/>
</dbReference>
<dbReference type="Gene3D" id="3.30.70.260">
    <property type="match status" value="1"/>
</dbReference>
<dbReference type="Gene3D" id="3.40.50.300">
    <property type="entry name" value="P-loop containing nucleotide triphosphate hydrolases"/>
    <property type="match status" value="1"/>
</dbReference>
<dbReference type="InterPro" id="IPR003593">
    <property type="entry name" value="AAA+_ATPase"/>
</dbReference>
<dbReference type="InterPro" id="IPR003439">
    <property type="entry name" value="ABC_transporter-like_ATP-bd"/>
</dbReference>
<dbReference type="InterPro" id="IPR017871">
    <property type="entry name" value="ABC_transporter-like_CS"/>
</dbReference>
<dbReference type="InterPro" id="IPR045865">
    <property type="entry name" value="ACT-like_dom_sf"/>
</dbReference>
<dbReference type="InterPro" id="IPR041701">
    <property type="entry name" value="MetN_ABC"/>
</dbReference>
<dbReference type="InterPro" id="IPR050086">
    <property type="entry name" value="MetN_ABC_transporter-like"/>
</dbReference>
<dbReference type="InterPro" id="IPR018449">
    <property type="entry name" value="NIL_domain"/>
</dbReference>
<dbReference type="InterPro" id="IPR027417">
    <property type="entry name" value="P-loop_NTPase"/>
</dbReference>
<dbReference type="PANTHER" id="PTHR43166">
    <property type="entry name" value="AMINO ACID IMPORT ATP-BINDING PROTEIN"/>
    <property type="match status" value="1"/>
</dbReference>
<dbReference type="PANTHER" id="PTHR43166:SF30">
    <property type="entry name" value="METHIONINE IMPORT ATP-BINDING PROTEIN METN"/>
    <property type="match status" value="1"/>
</dbReference>
<dbReference type="Pfam" id="PF00005">
    <property type="entry name" value="ABC_tran"/>
    <property type="match status" value="1"/>
</dbReference>
<dbReference type="Pfam" id="PF09383">
    <property type="entry name" value="NIL"/>
    <property type="match status" value="1"/>
</dbReference>
<dbReference type="SMART" id="SM00382">
    <property type="entry name" value="AAA"/>
    <property type="match status" value="1"/>
</dbReference>
<dbReference type="SMART" id="SM00930">
    <property type="entry name" value="NIL"/>
    <property type="match status" value="1"/>
</dbReference>
<dbReference type="SUPFAM" id="SSF55021">
    <property type="entry name" value="ACT-like"/>
    <property type="match status" value="1"/>
</dbReference>
<dbReference type="SUPFAM" id="SSF52540">
    <property type="entry name" value="P-loop containing nucleoside triphosphate hydrolases"/>
    <property type="match status" value="1"/>
</dbReference>
<dbReference type="PROSITE" id="PS00211">
    <property type="entry name" value="ABC_TRANSPORTER_1"/>
    <property type="match status" value="1"/>
</dbReference>
<dbReference type="PROSITE" id="PS50893">
    <property type="entry name" value="ABC_TRANSPORTER_2"/>
    <property type="match status" value="1"/>
</dbReference>
<dbReference type="PROSITE" id="PS51264">
    <property type="entry name" value="METN"/>
    <property type="match status" value="1"/>
</dbReference>
<evidence type="ECO:0000255" key="1">
    <source>
        <dbReference type="HAMAP-Rule" id="MF_01719"/>
    </source>
</evidence>
<gene>
    <name evidence="1" type="primary">metN1</name>
    <name type="ordered locus">Bxeno_A3414</name>
    <name type="ORF">Bxe_A0995</name>
</gene>
<protein>
    <recommendedName>
        <fullName evidence="1">Methionine import ATP-binding protein MetN 1</fullName>
        <ecNumber evidence="1">7.4.2.11</ecNumber>
    </recommendedName>
</protein>
<name>METN1_PARXL</name>
<sequence length="344" mass="37527">MIEIRNISQRFAGPRGSVEALHNVNLSIPAGEVFGIIGRSGAGKSTLVRTINLLTRPSEGNIVVNGRDLTTLPAAQLREARREIGMIFQHFNLLSSRTVYGNVALPLELAGMKRDEIEANVLPLLELVGLTAQKDRYPAQISGGQKQRVGIARALASKPKVLLSDEATSALDPETTRSILDLLRRINRELNLTIVLITHQMDVIKQVCDRVAVLDAGRVVEEGKVIDVFLQPHHEVTRALIGDVIAQELPPAMKARVAERLKTGSGHLLRLAFTGSGVDQPILSETIRRYELDFNILHGQIDEIQGQAFGSLAVLAGGEPAKVAQALTYLREQGVVVEELSYVE</sequence>
<reference key="1">
    <citation type="journal article" date="2006" name="Proc. Natl. Acad. Sci. U.S.A.">
        <title>Burkholderia xenovorans LB400 harbors a multi-replicon, 9.73-Mbp genome shaped for versatility.</title>
        <authorList>
            <person name="Chain P.S.G."/>
            <person name="Denef V.J."/>
            <person name="Konstantinidis K.T."/>
            <person name="Vergez L.M."/>
            <person name="Agullo L."/>
            <person name="Reyes V.L."/>
            <person name="Hauser L."/>
            <person name="Cordova M."/>
            <person name="Gomez L."/>
            <person name="Gonzalez M."/>
            <person name="Land M."/>
            <person name="Lao V."/>
            <person name="Larimer F."/>
            <person name="LiPuma J.J."/>
            <person name="Mahenthiralingam E."/>
            <person name="Malfatti S.A."/>
            <person name="Marx C.J."/>
            <person name="Parnell J.J."/>
            <person name="Ramette A."/>
            <person name="Richardson P."/>
            <person name="Seeger M."/>
            <person name="Smith D."/>
            <person name="Spilker T."/>
            <person name="Sul W.J."/>
            <person name="Tsoi T.V."/>
            <person name="Ulrich L.E."/>
            <person name="Zhulin I.B."/>
            <person name="Tiedje J.M."/>
        </authorList>
    </citation>
    <scope>NUCLEOTIDE SEQUENCE [LARGE SCALE GENOMIC DNA]</scope>
    <source>
        <strain>LB400</strain>
    </source>
</reference>